<comment type="function">
    <text evidence="1">Catalyzes the ATP- as well as the pyrophosphate-dependent phosphorylation of a specific serine residue in HPr, a phosphocarrier protein of the phosphoenolpyruvate-dependent sugar phosphotransferase system (PTS). HprK/P also catalyzes the pyrophosphate-producing, inorganic phosphate-dependent dephosphorylation (phosphorolysis) of seryl-phosphorylated HPr (P-Ser-HPr). The two antagonistic activities of HprK/P are regulated by several intracellular metabolites, which change their concentration in response to the absence or presence of rapidly metabolisable carbon sources (glucose, fructose, etc.) in the growth medium. Also phosphorylates/dephosphorylates the HPr-like catabolite repression protein crh on a specific serine residue. Therefore, by controlling the phosphorylation state of HPr and crh, HPrK/P is a sensor enzyme that plays a major role in the regulation of carbon metabolism and sugar transport: it mediates carbon catabolite repression (CCR), and regulates PTS-catalyzed carbohydrate uptake and inducer exclusion.</text>
</comment>
<comment type="catalytic activity">
    <reaction evidence="1">
        <text>[HPr protein]-L-serine + ATP = [HPr protein]-O-phospho-L-serine + ADP + H(+)</text>
        <dbReference type="Rhea" id="RHEA:46600"/>
        <dbReference type="Rhea" id="RHEA-COMP:11602"/>
        <dbReference type="Rhea" id="RHEA-COMP:11603"/>
        <dbReference type="ChEBI" id="CHEBI:15378"/>
        <dbReference type="ChEBI" id="CHEBI:29999"/>
        <dbReference type="ChEBI" id="CHEBI:30616"/>
        <dbReference type="ChEBI" id="CHEBI:83421"/>
        <dbReference type="ChEBI" id="CHEBI:456216"/>
    </reaction>
</comment>
<comment type="catalytic activity">
    <reaction evidence="1">
        <text>[HPr protein]-O-phospho-L-serine + phosphate + H(+) = [HPr protein]-L-serine + diphosphate</text>
        <dbReference type="Rhea" id="RHEA:46604"/>
        <dbReference type="Rhea" id="RHEA-COMP:11602"/>
        <dbReference type="Rhea" id="RHEA-COMP:11603"/>
        <dbReference type="ChEBI" id="CHEBI:15378"/>
        <dbReference type="ChEBI" id="CHEBI:29999"/>
        <dbReference type="ChEBI" id="CHEBI:33019"/>
        <dbReference type="ChEBI" id="CHEBI:43474"/>
        <dbReference type="ChEBI" id="CHEBI:83421"/>
    </reaction>
</comment>
<comment type="cofactor">
    <cofactor evidence="1">
        <name>Mg(2+)</name>
        <dbReference type="ChEBI" id="CHEBI:18420"/>
    </cofactor>
</comment>
<comment type="subunit">
    <text evidence="1">Homohexamer.</text>
</comment>
<comment type="domain">
    <text evidence="1">The Walker A ATP-binding motif also binds Pi and PPi.</text>
</comment>
<comment type="miscellaneous">
    <text evidence="1">Both phosphorylation and phosphorolysis are carried out by the same active site and suggest a common mechanism for both reactions.</text>
</comment>
<comment type="similarity">
    <text evidence="1">Belongs to the HPrK/P family.</text>
</comment>
<keyword id="KW-0067">ATP-binding</keyword>
<keyword id="KW-0119">Carbohydrate metabolism</keyword>
<keyword id="KW-0418">Kinase</keyword>
<keyword id="KW-0460">Magnesium</keyword>
<keyword id="KW-0479">Metal-binding</keyword>
<keyword id="KW-0511">Multifunctional enzyme</keyword>
<keyword id="KW-0547">Nucleotide-binding</keyword>
<keyword id="KW-0723">Serine/threonine-protein kinase</keyword>
<keyword id="KW-0808">Transferase</keyword>
<feature type="chain" id="PRO_1000139884" description="HPr kinase/phosphorylase">
    <location>
        <begin position="1"/>
        <end position="309"/>
    </location>
</feature>
<feature type="region of interest" description="Important for the catalytic mechanism of both phosphorylation and dephosphorylation" evidence="1">
    <location>
        <begin position="201"/>
        <end position="210"/>
    </location>
</feature>
<feature type="region of interest" description="Important for the catalytic mechanism of dephosphorylation" evidence="1">
    <location>
        <begin position="264"/>
        <end position="269"/>
    </location>
</feature>
<feature type="active site" evidence="1">
    <location>
        <position position="138"/>
    </location>
</feature>
<feature type="active site" evidence="1">
    <location>
        <position position="159"/>
    </location>
</feature>
<feature type="active site" description="Proton acceptor; for phosphorylation activity. Proton donor; for dephosphorylation activity" evidence="1">
    <location>
        <position position="177"/>
    </location>
</feature>
<feature type="active site" evidence="1">
    <location>
        <position position="243"/>
    </location>
</feature>
<feature type="binding site" evidence="1">
    <location>
        <begin position="153"/>
        <end position="160"/>
    </location>
    <ligand>
        <name>ATP</name>
        <dbReference type="ChEBI" id="CHEBI:30616"/>
    </ligand>
</feature>
<feature type="binding site" evidence="1">
    <location>
        <position position="160"/>
    </location>
    <ligand>
        <name>Mg(2+)</name>
        <dbReference type="ChEBI" id="CHEBI:18420"/>
    </ligand>
</feature>
<feature type="binding site" evidence="1">
    <location>
        <position position="202"/>
    </location>
    <ligand>
        <name>Mg(2+)</name>
        <dbReference type="ChEBI" id="CHEBI:18420"/>
    </ligand>
</feature>
<name>HPRK_BACC0</name>
<gene>
    <name evidence="1" type="primary">hprK</name>
    <name type="ordered locus">BCAH820_5248</name>
</gene>
<evidence type="ECO:0000255" key="1">
    <source>
        <dbReference type="HAMAP-Rule" id="MF_01249"/>
    </source>
</evidence>
<dbReference type="EC" id="2.7.11.-" evidence="1"/>
<dbReference type="EC" id="2.7.4.-" evidence="1"/>
<dbReference type="EMBL" id="CP001283">
    <property type="protein sequence ID" value="ACK90373.1"/>
    <property type="molecule type" value="Genomic_DNA"/>
</dbReference>
<dbReference type="RefSeq" id="WP_001127241.1">
    <property type="nucleotide sequence ID" value="NC_011773.1"/>
</dbReference>
<dbReference type="SMR" id="B7JFJ0"/>
<dbReference type="KEGG" id="bcu:BCAH820_5248"/>
<dbReference type="HOGENOM" id="CLU_052030_0_1_9"/>
<dbReference type="Proteomes" id="UP000001363">
    <property type="component" value="Chromosome"/>
</dbReference>
<dbReference type="GO" id="GO:0005524">
    <property type="term" value="F:ATP binding"/>
    <property type="evidence" value="ECO:0007669"/>
    <property type="project" value="UniProtKB-UniRule"/>
</dbReference>
<dbReference type="GO" id="GO:0000287">
    <property type="term" value="F:magnesium ion binding"/>
    <property type="evidence" value="ECO:0007669"/>
    <property type="project" value="UniProtKB-UniRule"/>
</dbReference>
<dbReference type="GO" id="GO:0000155">
    <property type="term" value="F:phosphorelay sensor kinase activity"/>
    <property type="evidence" value="ECO:0007669"/>
    <property type="project" value="InterPro"/>
</dbReference>
<dbReference type="GO" id="GO:0004674">
    <property type="term" value="F:protein serine/threonine kinase activity"/>
    <property type="evidence" value="ECO:0007669"/>
    <property type="project" value="UniProtKB-KW"/>
</dbReference>
<dbReference type="GO" id="GO:0004712">
    <property type="term" value="F:protein serine/threonine/tyrosine kinase activity"/>
    <property type="evidence" value="ECO:0007669"/>
    <property type="project" value="UniProtKB-UniRule"/>
</dbReference>
<dbReference type="GO" id="GO:0006109">
    <property type="term" value="P:regulation of carbohydrate metabolic process"/>
    <property type="evidence" value="ECO:0007669"/>
    <property type="project" value="UniProtKB-UniRule"/>
</dbReference>
<dbReference type="CDD" id="cd01918">
    <property type="entry name" value="HprK_C"/>
    <property type="match status" value="1"/>
</dbReference>
<dbReference type="FunFam" id="3.40.1390.20:FF:000002">
    <property type="entry name" value="HPr kinase/phosphorylase"/>
    <property type="match status" value="1"/>
</dbReference>
<dbReference type="FunFam" id="3.40.50.300:FF:000174">
    <property type="entry name" value="HPr kinase/phosphorylase"/>
    <property type="match status" value="1"/>
</dbReference>
<dbReference type="Gene3D" id="3.40.1390.20">
    <property type="entry name" value="HprK N-terminal domain-like"/>
    <property type="match status" value="1"/>
</dbReference>
<dbReference type="Gene3D" id="3.40.50.300">
    <property type="entry name" value="P-loop containing nucleotide triphosphate hydrolases"/>
    <property type="match status" value="1"/>
</dbReference>
<dbReference type="HAMAP" id="MF_01249">
    <property type="entry name" value="HPr_kinase"/>
    <property type="match status" value="1"/>
</dbReference>
<dbReference type="InterPro" id="IPR003755">
    <property type="entry name" value="HPr(Ser)_kin/Pase"/>
</dbReference>
<dbReference type="InterPro" id="IPR011104">
    <property type="entry name" value="Hpr_kin/Pase_C"/>
</dbReference>
<dbReference type="InterPro" id="IPR011126">
    <property type="entry name" value="Hpr_kin/Pase_Hpr_N"/>
</dbReference>
<dbReference type="InterPro" id="IPR027417">
    <property type="entry name" value="P-loop_NTPase"/>
</dbReference>
<dbReference type="InterPro" id="IPR028979">
    <property type="entry name" value="Ser_kin/Pase_Hpr-like_N_sf"/>
</dbReference>
<dbReference type="NCBIfam" id="TIGR00679">
    <property type="entry name" value="hpr-ser"/>
    <property type="match status" value="1"/>
</dbReference>
<dbReference type="PANTHER" id="PTHR30305:SF1">
    <property type="entry name" value="HPR KINASE_PHOSPHORYLASE"/>
    <property type="match status" value="1"/>
</dbReference>
<dbReference type="PANTHER" id="PTHR30305">
    <property type="entry name" value="PROTEIN YJDM-RELATED"/>
    <property type="match status" value="1"/>
</dbReference>
<dbReference type="Pfam" id="PF07475">
    <property type="entry name" value="Hpr_kinase_C"/>
    <property type="match status" value="1"/>
</dbReference>
<dbReference type="Pfam" id="PF02603">
    <property type="entry name" value="Hpr_kinase_N"/>
    <property type="match status" value="1"/>
</dbReference>
<dbReference type="SUPFAM" id="SSF75138">
    <property type="entry name" value="HprK N-terminal domain-like"/>
    <property type="match status" value="1"/>
</dbReference>
<dbReference type="SUPFAM" id="SSF53795">
    <property type="entry name" value="PEP carboxykinase-like"/>
    <property type="match status" value="1"/>
</dbReference>
<organism>
    <name type="scientific">Bacillus cereus (strain AH820)</name>
    <dbReference type="NCBI Taxonomy" id="405535"/>
    <lineage>
        <taxon>Bacteria</taxon>
        <taxon>Bacillati</taxon>
        <taxon>Bacillota</taxon>
        <taxon>Bacilli</taxon>
        <taxon>Bacillales</taxon>
        <taxon>Bacillaceae</taxon>
        <taxon>Bacillus</taxon>
        <taxon>Bacillus cereus group</taxon>
    </lineage>
</organism>
<proteinExistence type="inferred from homology"/>
<protein>
    <recommendedName>
        <fullName evidence="1">HPr kinase/phosphorylase</fullName>
        <shortName evidence="1">HPrK/P</shortName>
        <ecNumber evidence="1">2.7.11.-</ecNumber>
        <ecNumber evidence="1">2.7.4.-</ecNumber>
    </recommendedName>
    <alternativeName>
        <fullName evidence="1">HPr(Ser) kinase/phosphorylase</fullName>
    </alternativeName>
</protein>
<sequence>MPKVRTKDLIEQFHLELISGEEGIHRPIDTSDLSRPGIEMAGFFTYYPADRVQLLGKTELTFFDTLTSDQKQERMKALCTEETPCIIVTRNQDVPDELLQASRESGMPLLRSSQTTTRLSSRLTNYLEGKLAPTTAVHGVLVDIYGVGVLITGQSGVGKSETALELVKRGHRLVADDSVEIRQEDEDMLVGSSPDLIEHLLEIRGLGIINVMTLFGAGAVRNYKRITLVINLEIWDQKKNYDRLGLDEEKMKIIDTELTKITLPVRPGRNLAVIIEVAAMNFRLKRMGVNAAQQFSERLMSAIELGNQE</sequence>
<reference key="1">
    <citation type="submission" date="2008-10" db="EMBL/GenBank/DDBJ databases">
        <title>Genome sequence of Bacillus cereus AH820.</title>
        <authorList>
            <person name="Dodson R.J."/>
            <person name="Durkin A.S."/>
            <person name="Rosovitz M.J."/>
            <person name="Rasko D.A."/>
            <person name="Hoffmaster A."/>
            <person name="Ravel J."/>
            <person name="Sutton G."/>
        </authorList>
    </citation>
    <scope>NUCLEOTIDE SEQUENCE [LARGE SCALE GENOMIC DNA]</scope>
    <source>
        <strain>AH820</strain>
    </source>
</reference>
<accession>B7JFJ0</accession>